<accession>Q9L4G1</accession>
<protein>
    <recommendedName>
        <fullName>Peptidase T</fullName>
        <ecNumber>3.4.11.4</ecNumber>
    </recommendedName>
    <alternativeName>
        <fullName>Aminotripeptidase</fullName>
        <shortName>Tripeptidase</shortName>
    </alternativeName>
    <alternativeName>
        <fullName>Tripeptide aminopeptidase</fullName>
    </alternativeName>
</protein>
<keyword id="KW-0031">Aminopeptidase</keyword>
<keyword id="KW-0963">Cytoplasm</keyword>
<keyword id="KW-0903">Direct protein sequencing</keyword>
<keyword id="KW-0378">Hydrolase</keyword>
<keyword id="KW-0479">Metal-binding</keyword>
<keyword id="KW-0482">Metalloprotease</keyword>
<keyword id="KW-0645">Protease</keyword>
<keyword id="KW-0862">Zinc</keyword>
<feature type="chain" id="PRO_0000185300" description="Peptidase T">
    <location>
        <begin position="1"/>
        <end position="413"/>
    </location>
</feature>
<feature type="active site" evidence="1">
    <location>
        <position position="84"/>
    </location>
</feature>
<feature type="active site" description="Proton acceptor" evidence="1">
    <location>
        <position position="178"/>
    </location>
</feature>
<feature type="binding site" evidence="1">
    <location>
        <position position="82"/>
    </location>
    <ligand>
        <name>Zn(2+)</name>
        <dbReference type="ChEBI" id="CHEBI:29105"/>
        <label>1</label>
    </ligand>
</feature>
<feature type="binding site" evidence="1">
    <location>
        <position position="144"/>
    </location>
    <ligand>
        <name>Zn(2+)</name>
        <dbReference type="ChEBI" id="CHEBI:29105"/>
        <label>1</label>
    </ligand>
</feature>
<feature type="binding site" evidence="1">
    <location>
        <position position="144"/>
    </location>
    <ligand>
        <name>Zn(2+)</name>
        <dbReference type="ChEBI" id="CHEBI:29105"/>
        <label>2</label>
    </ligand>
</feature>
<feature type="binding site" evidence="1">
    <location>
        <position position="179"/>
    </location>
    <ligand>
        <name>Zn(2+)</name>
        <dbReference type="ChEBI" id="CHEBI:29105"/>
        <label>2</label>
    </ligand>
</feature>
<feature type="binding site" evidence="1">
    <location>
        <position position="201"/>
    </location>
    <ligand>
        <name>Zn(2+)</name>
        <dbReference type="ChEBI" id="CHEBI:29105"/>
        <label>1</label>
    </ligand>
</feature>
<feature type="binding site" evidence="1">
    <location>
        <position position="383"/>
    </location>
    <ligand>
        <name>Zn(2+)</name>
        <dbReference type="ChEBI" id="CHEBI:29105"/>
        <label>2</label>
    </ligand>
</feature>
<gene>
    <name type="primary">pepT</name>
</gene>
<reference key="1">
    <citation type="journal article" date="2000" name="Appl. Environ. Microbiol.">
        <title>Purification and molecular characterization of a tripeptidase from Lactobacillus helveticus.</title>
        <authorList>
            <person name="Savijoki K."/>
            <person name="Palva A."/>
        </authorList>
    </citation>
    <scope>NUCLEOTIDE SEQUENCE [GENOMIC DNA]</scope>
    <scope>PROTEIN SEQUENCE OF 1-17</scope>
    <scope>FUNCTION</scope>
    <scope>CHARACTERIZATION</scope>
    <scope>SUBSTRATE SPECIFICITY</scope>
    <scope>ACTIVITY REGULATION</scope>
    <scope>SUBUNIT</scope>
    <scope>BIOPHYSICOCHEMICAL PROPERTIES</scope>
    <source>
        <strain>53/7</strain>
    </source>
</reference>
<sequence length="413" mass="46681">MEYPNLLPRFLKYVKVNSRSDENSDRFPSTEREENFQKNVIMKDLEELGLSDIHYNQKAGSVIAEIPSNVDYDVPVMGFLAHSDTADFNSENVKPQIHKNYDGESKIQLGDSEFYLDPEVYPNLRKYKGQTIITASGDTLLGADDKCGISELMTFAEYLMNHPEVKHGKIRLAFTPDEEIGTGAEQFDVKDFGADFAFTVDGEAPGKLGDCTFSAAQFTLDIQGVNVHPAVAKGQMINAVQVGIDFHNQLPEHDRPEHTDGREGFFHLLSFDGTVDHAHLAYIIRDFERDGLEERKNLVKSIVKKMNDEFGTERIKLQMNDQYYNMADELKKHMDIVDLARDAYKAEGLEVNEDPVRGGTDGSQLTYMGLPCPNIFAGEENMHGRYEYTVLESMYKTVDVMIKMAELNAERAK</sequence>
<organism>
    <name type="scientific">Lactobacillus helveticus</name>
    <name type="common">Lactobacillus suntoryeus</name>
    <dbReference type="NCBI Taxonomy" id="1587"/>
    <lineage>
        <taxon>Bacteria</taxon>
        <taxon>Bacillati</taxon>
        <taxon>Bacillota</taxon>
        <taxon>Bacilli</taxon>
        <taxon>Lactobacillales</taxon>
        <taxon>Lactobacillaceae</taxon>
        <taxon>Lactobacillus</taxon>
    </lineage>
</organism>
<name>PEPT_LACHE</name>
<comment type="function">
    <text evidence="2">Cleaves the N-terminal amino acid of tripeptides. Shows broad substrate specificity, exhibiting maximum activity against hydrophobic tripeptides, with the highest activity for Met-Gly-Gly. Therefore this enzyme may play an important role in flavor formation during cheese ripening. Is also able to slowly hydrolyze some hydrophobic dipeptides, but displays no activity against tetrapeptides and the tripeptide Phe-Gly-Gly.</text>
</comment>
<comment type="catalytic activity">
    <reaction>
        <text>Release of the N-terminal residue from a tripeptide.</text>
        <dbReference type="EC" id="3.4.11.4"/>
    </reaction>
</comment>
<comment type="cofactor">
    <cofactor evidence="3">
        <name>Zn(2+)</name>
        <dbReference type="ChEBI" id="CHEBI:29105"/>
    </cofactor>
    <text evidence="3">Binds 2 Zn(2+) ions per subunit.</text>
</comment>
<comment type="activity regulation">
    <text evidence="2">Totally inhibited by EDTA, EGTA, and 1,10-phenanthroline. Strongly inhibited by divalent cations such as Cu(2+), Cd(2+), Co(2+) and Mn(2+). Partially inhibited by the reducing agents 2-mercaptoethanol and dithiothreitol.</text>
</comment>
<comment type="biophysicochemical properties">
    <kinetics>
        <KM evidence="2">2.6 mM for tripeptide Met-Gly-Gly</KM>
        <KM evidence="2">0.6 mM for tripeptide Leu-Gly-Gly</KM>
        <Vmax evidence="2">80.2 umol/min/ug enzyme with Met-Gly-Gly as substrate</Vmax>
        <Vmax evidence="2">6.8 umol/min/ug enzyme with Leu-Gly-Gly as substrate</Vmax>
    </kinetics>
    <phDependence>
        <text evidence="2">Optimum pH is 7.5. Highly active from pH 6 to 8.</text>
    </phDependence>
    <temperatureDependence>
        <text evidence="2">Optimum temperature is 25-37 degrees Celsius. Thermolabile. Approximately 45% of the activity remains after incubation for 15 min at 45 degrees Celsius.</text>
    </temperatureDependence>
</comment>
<comment type="subunit">
    <text evidence="4">Homotrimer.</text>
</comment>
<comment type="subcellular location">
    <subcellularLocation>
        <location evidence="3">Cytoplasm</location>
    </subcellularLocation>
</comment>
<comment type="similarity">
    <text evidence="3">Belongs to the peptidase M20B family.</text>
</comment>
<comment type="sequence caution" evidence="3">
    <conflict type="frameshift">
        <sequence resource="EMBL-CDS" id="CAB72938"/>
    </conflict>
</comment>
<evidence type="ECO:0000250" key="1"/>
<evidence type="ECO:0000269" key="2">
    <source>
    </source>
</evidence>
<evidence type="ECO:0000305" key="3"/>
<evidence type="ECO:0000305" key="4">
    <source>
    </source>
</evidence>
<proteinExistence type="evidence at protein level"/>
<dbReference type="EC" id="3.4.11.4"/>
<dbReference type="EMBL" id="AJ243321">
    <property type="protein sequence ID" value="CAB72938.1"/>
    <property type="status" value="ALT_FRAME"/>
    <property type="molecule type" value="Genomic_DNA"/>
</dbReference>
<dbReference type="SMR" id="Q9L4G1"/>
<dbReference type="eggNOG" id="COG2195">
    <property type="taxonomic scope" value="Bacteria"/>
</dbReference>
<dbReference type="BRENDA" id="3.4.11.4">
    <property type="organism ID" value="2870"/>
</dbReference>
<dbReference type="SABIO-RK" id="Q9L4G1"/>
<dbReference type="GO" id="GO:0005829">
    <property type="term" value="C:cytosol"/>
    <property type="evidence" value="ECO:0007669"/>
    <property type="project" value="TreeGrafter"/>
</dbReference>
<dbReference type="GO" id="GO:0008237">
    <property type="term" value="F:metallopeptidase activity"/>
    <property type="evidence" value="ECO:0007669"/>
    <property type="project" value="UniProtKB-KW"/>
</dbReference>
<dbReference type="GO" id="GO:0045148">
    <property type="term" value="F:tripeptide aminopeptidase activity"/>
    <property type="evidence" value="ECO:0007669"/>
    <property type="project" value="UniProtKB-EC"/>
</dbReference>
<dbReference type="GO" id="GO:0008270">
    <property type="term" value="F:zinc ion binding"/>
    <property type="evidence" value="ECO:0007669"/>
    <property type="project" value="InterPro"/>
</dbReference>
<dbReference type="GO" id="GO:0006518">
    <property type="term" value="P:peptide metabolic process"/>
    <property type="evidence" value="ECO:0007669"/>
    <property type="project" value="InterPro"/>
</dbReference>
<dbReference type="GO" id="GO:0006508">
    <property type="term" value="P:proteolysis"/>
    <property type="evidence" value="ECO:0007669"/>
    <property type="project" value="UniProtKB-KW"/>
</dbReference>
<dbReference type="CDD" id="cd03892">
    <property type="entry name" value="M20_peptT"/>
    <property type="match status" value="1"/>
</dbReference>
<dbReference type="FunFam" id="3.30.70.360:FF:000002">
    <property type="entry name" value="Peptidase T"/>
    <property type="match status" value="1"/>
</dbReference>
<dbReference type="Gene3D" id="3.30.70.360">
    <property type="match status" value="1"/>
</dbReference>
<dbReference type="Gene3D" id="3.40.630.10">
    <property type="entry name" value="Zn peptidases"/>
    <property type="match status" value="1"/>
</dbReference>
<dbReference type="InterPro" id="IPR001261">
    <property type="entry name" value="ArgE/DapE_CS"/>
</dbReference>
<dbReference type="InterPro" id="IPR036264">
    <property type="entry name" value="Bact_exopeptidase_dim_dom"/>
</dbReference>
<dbReference type="InterPro" id="IPR002933">
    <property type="entry name" value="Peptidase_M20"/>
</dbReference>
<dbReference type="InterPro" id="IPR011650">
    <property type="entry name" value="Peptidase_M20_dimer"/>
</dbReference>
<dbReference type="InterPro" id="IPR010161">
    <property type="entry name" value="Peptidase_M20B"/>
</dbReference>
<dbReference type="NCBIfam" id="TIGR01882">
    <property type="entry name" value="peptidase-T"/>
    <property type="match status" value="1"/>
</dbReference>
<dbReference type="NCBIfam" id="NF003976">
    <property type="entry name" value="PRK05469.1"/>
    <property type="match status" value="1"/>
</dbReference>
<dbReference type="NCBIfam" id="NF009920">
    <property type="entry name" value="PRK13381.1"/>
    <property type="match status" value="1"/>
</dbReference>
<dbReference type="PANTHER" id="PTHR42994">
    <property type="entry name" value="PEPTIDASE T"/>
    <property type="match status" value="1"/>
</dbReference>
<dbReference type="PANTHER" id="PTHR42994:SF1">
    <property type="entry name" value="PEPTIDASE T"/>
    <property type="match status" value="1"/>
</dbReference>
<dbReference type="Pfam" id="PF07687">
    <property type="entry name" value="M20_dimer"/>
    <property type="match status" value="1"/>
</dbReference>
<dbReference type="Pfam" id="PF01546">
    <property type="entry name" value="Peptidase_M20"/>
    <property type="match status" value="1"/>
</dbReference>
<dbReference type="PIRSF" id="PIRSF037215">
    <property type="entry name" value="Peptidase_M20B"/>
    <property type="match status" value="1"/>
</dbReference>
<dbReference type="SUPFAM" id="SSF55031">
    <property type="entry name" value="Bacterial exopeptidase dimerisation domain"/>
    <property type="match status" value="1"/>
</dbReference>
<dbReference type="SUPFAM" id="SSF53187">
    <property type="entry name" value="Zn-dependent exopeptidases"/>
    <property type="match status" value="1"/>
</dbReference>
<dbReference type="PROSITE" id="PS00759">
    <property type="entry name" value="ARGE_DAPE_CPG2_2"/>
    <property type="match status" value="1"/>
</dbReference>